<accession>Q3INI7</accession>
<reference key="1">
    <citation type="journal article" date="2005" name="Genome Res.">
        <title>Living with two extremes: conclusions from the genome sequence of Natronomonas pharaonis.</title>
        <authorList>
            <person name="Falb M."/>
            <person name="Pfeiffer F."/>
            <person name="Palm P."/>
            <person name="Rodewald K."/>
            <person name="Hickmann V."/>
            <person name="Tittor J."/>
            <person name="Oesterhelt D."/>
        </authorList>
    </citation>
    <scope>NUCLEOTIDE SEQUENCE [LARGE SCALE GENOMIC DNA]</scope>
    <source>
        <strain>ATCC 35678 / DSM 2160 / CIP 103997 / JCM 8858 / NBRC 14720 / NCIMB 2260 / Gabara</strain>
    </source>
</reference>
<proteinExistence type="inferred from homology"/>
<dbReference type="EMBL" id="CR936257">
    <property type="protein sequence ID" value="CAI50316.1"/>
    <property type="molecule type" value="Genomic_DNA"/>
</dbReference>
<dbReference type="RefSeq" id="WP_011323931.1">
    <property type="nucleotide sequence ID" value="NC_007426.1"/>
</dbReference>
<dbReference type="SMR" id="Q3INI7"/>
<dbReference type="STRING" id="348780.NP_4450A"/>
<dbReference type="EnsemblBacteria" id="CAI50316">
    <property type="protein sequence ID" value="CAI50316"/>
    <property type="gene ID" value="NP_4450A"/>
</dbReference>
<dbReference type="GeneID" id="3703119"/>
<dbReference type="KEGG" id="nph:NP_4450A"/>
<dbReference type="eggNOG" id="arCOG04288">
    <property type="taxonomic scope" value="Archaea"/>
</dbReference>
<dbReference type="HOGENOM" id="CLU_053173_0_0_2"/>
<dbReference type="OrthoDB" id="30930at2157"/>
<dbReference type="Proteomes" id="UP000002698">
    <property type="component" value="Chromosome"/>
</dbReference>
<dbReference type="GO" id="GO:0022625">
    <property type="term" value="C:cytosolic large ribosomal subunit"/>
    <property type="evidence" value="ECO:0007669"/>
    <property type="project" value="TreeGrafter"/>
</dbReference>
<dbReference type="GO" id="GO:0070180">
    <property type="term" value="F:large ribosomal subunit rRNA binding"/>
    <property type="evidence" value="ECO:0007669"/>
    <property type="project" value="UniProtKB-UniRule"/>
</dbReference>
<dbReference type="GO" id="GO:0003735">
    <property type="term" value="F:structural constituent of ribosome"/>
    <property type="evidence" value="ECO:0007669"/>
    <property type="project" value="TreeGrafter"/>
</dbReference>
<dbReference type="GO" id="GO:0002181">
    <property type="term" value="P:cytoplasmic translation"/>
    <property type="evidence" value="ECO:0007669"/>
    <property type="project" value="TreeGrafter"/>
</dbReference>
<dbReference type="GO" id="GO:0000027">
    <property type="term" value="P:ribosomal large subunit assembly"/>
    <property type="evidence" value="ECO:0007669"/>
    <property type="project" value="TreeGrafter"/>
</dbReference>
<dbReference type="CDD" id="cd05795">
    <property type="entry name" value="Ribosomal_P0_L10e"/>
    <property type="match status" value="1"/>
</dbReference>
<dbReference type="Gene3D" id="3.30.70.1730">
    <property type="match status" value="1"/>
</dbReference>
<dbReference type="Gene3D" id="3.90.105.20">
    <property type="match status" value="1"/>
</dbReference>
<dbReference type="Gene3D" id="6.10.140.760">
    <property type="match status" value="1"/>
</dbReference>
<dbReference type="HAMAP" id="MF_00280">
    <property type="entry name" value="Ribosomal_uL10_arch"/>
    <property type="match status" value="1"/>
</dbReference>
<dbReference type="InterPro" id="IPR050323">
    <property type="entry name" value="Ribosomal_protein_uL10"/>
</dbReference>
<dbReference type="InterPro" id="IPR001790">
    <property type="entry name" value="Ribosomal_uL10"/>
</dbReference>
<dbReference type="InterPro" id="IPR040637">
    <property type="entry name" value="Ribosomal_uL10-like_insert"/>
</dbReference>
<dbReference type="InterPro" id="IPR043164">
    <property type="entry name" value="Ribosomal_uL10-like_insert_sf"/>
</dbReference>
<dbReference type="InterPro" id="IPR043141">
    <property type="entry name" value="Ribosomal_uL10-like_sf"/>
</dbReference>
<dbReference type="InterPro" id="IPR022909">
    <property type="entry name" value="Ribosomal_uL10_arc"/>
</dbReference>
<dbReference type="NCBIfam" id="NF003097">
    <property type="entry name" value="PRK04019.1-4"/>
    <property type="match status" value="1"/>
</dbReference>
<dbReference type="NCBIfam" id="NF003098">
    <property type="entry name" value="PRK04019.1-5"/>
    <property type="match status" value="1"/>
</dbReference>
<dbReference type="PANTHER" id="PTHR45699">
    <property type="entry name" value="60S ACIDIC RIBOSOMAL PROTEIN P0"/>
    <property type="match status" value="1"/>
</dbReference>
<dbReference type="PANTHER" id="PTHR45699:SF3">
    <property type="entry name" value="LARGE RIBOSOMAL SUBUNIT PROTEIN UL10"/>
    <property type="match status" value="1"/>
</dbReference>
<dbReference type="Pfam" id="PF00466">
    <property type="entry name" value="Ribosomal_L10"/>
    <property type="match status" value="1"/>
</dbReference>
<dbReference type="Pfam" id="PF17777">
    <property type="entry name" value="RL10P_insert"/>
    <property type="match status" value="1"/>
</dbReference>
<dbReference type="SUPFAM" id="SSF160369">
    <property type="entry name" value="Ribosomal protein L10-like"/>
    <property type="match status" value="1"/>
</dbReference>
<organism>
    <name type="scientific">Natronomonas pharaonis (strain ATCC 35678 / DSM 2160 / CIP 103997 / JCM 8858 / NBRC 14720 / NCIMB 2260 / Gabara)</name>
    <name type="common">Halobacterium pharaonis</name>
    <dbReference type="NCBI Taxonomy" id="348780"/>
    <lineage>
        <taxon>Archaea</taxon>
        <taxon>Methanobacteriati</taxon>
        <taxon>Methanobacteriota</taxon>
        <taxon>Stenosarchaea group</taxon>
        <taxon>Halobacteria</taxon>
        <taxon>Halobacteriales</taxon>
        <taxon>Haloarculaceae</taxon>
        <taxon>Natronomonas</taxon>
    </lineage>
</organism>
<feature type="chain" id="PRO_1000078823" description="Large ribosomal subunit protein uL10">
    <location>
        <begin position="1"/>
        <end position="354"/>
    </location>
</feature>
<feature type="region of interest" description="Disordered" evidence="2">
    <location>
        <begin position="286"/>
        <end position="354"/>
    </location>
</feature>
<feature type="compositionally biased region" description="Acidic residues" evidence="2">
    <location>
        <begin position="286"/>
        <end position="296"/>
    </location>
</feature>
<feature type="compositionally biased region" description="Acidic residues" evidence="2">
    <location>
        <begin position="307"/>
        <end position="345"/>
    </location>
</feature>
<sequence length="354" mass="37197">MSAEARKTETIPEWKQEEIDELVAFLERYESVGVVDITGIPSRQLQDMRRDLHGTAALRVSRNTLMERALNEGGDGLGELVEHVEGQVGLIGTNDNPFGLYQQLEESKTPAPINAGEVAPNDIVIPEGDTGVDPGPFVGDLQQVGANARIEGGSIKVVEDSTVLSAGEEVSSDLSNVLSELGIEPKEVGLDLRGVSSEGVLFSPEELDIDVESYRTDIESAASAARNLSVNAEYPTARTAPSMLAKAAGEAKSVGLSAAVESPDLADDLVSKADAQVRALAAQIDDEEALPEELQDVEQPAAADSAAEADDEDDTGNVEQTDESDADDADDADDADDADEEDGDGGDALGDMFG</sequence>
<name>RL10_NATPD</name>
<protein>
    <recommendedName>
        <fullName evidence="1">Large ribosomal subunit protein uL10</fullName>
    </recommendedName>
    <alternativeName>
        <fullName evidence="3">50S ribosomal protein L10</fullName>
    </alternativeName>
    <alternativeName>
        <fullName evidence="1">Acidic ribosomal protein P0 homolog</fullName>
    </alternativeName>
</protein>
<evidence type="ECO:0000255" key="1">
    <source>
        <dbReference type="HAMAP-Rule" id="MF_00280"/>
    </source>
</evidence>
<evidence type="ECO:0000256" key="2">
    <source>
        <dbReference type="SAM" id="MobiDB-lite"/>
    </source>
</evidence>
<evidence type="ECO:0000305" key="3"/>
<comment type="function">
    <text evidence="1">Forms part of the ribosomal stalk, playing a central role in the interaction of the ribosome with GTP-bound translation factors.</text>
</comment>
<comment type="subunit">
    <text evidence="1">Part of the 50S ribosomal subunit. Forms part of the ribosomal stalk which helps the ribosome interact with GTP-bound translation factors. Forms a heptameric L10(L12)2(L12)2(L12)2 complex, where L10 forms an elongated spine to which the L12 dimers bind in a sequential fashion.</text>
</comment>
<comment type="similarity">
    <text evidence="1">Belongs to the universal ribosomal protein uL10 family.</text>
</comment>
<keyword id="KW-1185">Reference proteome</keyword>
<keyword id="KW-0687">Ribonucleoprotein</keyword>
<keyword id="KW-0689">Ribosomal protein</keyword>
<keyword id="KW-0694">RNA-binding</keyword>
<keyword id="KW-0699">rRNA-binding</keyword>
<gene>
    <name evidence="1" type="primary">rpl10</name>
    <name evidence="1" type="synonym">rplP0</name>
    <name type="ordered locus">NP_4450A</name>
</gene>